<name>PPIL1_SCHPO</name>
<proteinExistence type="evidence at protein level"/>
<evidence type="ECO:0000250" key="1"/>
<evidence type="ECO:0000255" key="2">
    <source>
        <dbReference type="PROSITE-ProRule" id="PRU00156"/>
    </source>
</evidence>
<evidence type="ECO:0000269" key="3">
    <source>
    </source>
</evidence>
<evidence type="ECO:0000305" key="4"/>
<evidence type="ECO:0007829" key="5">
    <source>
        <dbReference type="PDB" id="9ESH"/>
    </source>
</evidence>
<evidence type="ECO:0007829" key="6">
    <source>
        <dbReference type="PDB" id="9ESI"/>
    </source>
</evidence>
<keyword id="KW-0002">3D-structure</keyword>
<keyword id="KW-0413">Isomerase</keyword>
<keyword id="KW-1185">Reference proteome</keyword>
<keyword id="KW-0697">Rotamase</keyword>
<gene>
    <name type="primary">ppi1</name>
    <name type="synonym">cyp2</name>
    <name type="ORF">SPAC57A10.03</name>
</gene>
<sequence length="155" mass="16864">MANVELQTSLGKILIELYTEHAPKTCQNFYTLAKEGYYDGVIFHRVIPDFVIQGGDPTGTGRGGTSIYGDKFDDEIHSDLHHTGAGILSMANAGPNTNSSQFFITLAPTPWLDGKHTIFGRVVSGLSVCKRMGLIRTDSSDRPIEPLKIIKAVAL</sequence>
<protein>
    <recommendedName>
        <fullName>Peptidyl-prolyl cis-trans isomerase ppi1</fullName>
        <shortName>PPIase ppi1</shortName>
        <ecNumber>5.2.1.8</ecNumber>
    </recommendedName>
    <alternativeName>
        <fullName>Cyclophilin ppi1</fullName>
    </alternativeName>
    <alternativeName>
        <fullName>Rotamase ppi1</fullName>
    </alternativeName>
</protein>
<accession>P87051</accession>
<comment type="function">
    <text evidence="1">PPIases accelerate the folding of proteins. It catalyzes the cis-trans isomerization of proline imidic peptide bonds in oligopeptides (By similarity).</text>
</comment>
<comment type="catalytic activity">
    <reaction>
        <text>[protein]-peptidylproline (omega=180) = [protein]-peptidylproline (omega=0)</text>
        <dbReference type="Rhea" id="RHEA:16237"/>
        <dbReference type="Rhea" id="RHEA-COMP:10747"/>
        <dbReference type="Rhea" id="RHEA-COMP:10748"/>
        <dbReference type="ChEBI" id="CHEBI:83833"/>
        <dbReference type="ChEBI" id="CHEBI:83834"/>
        <dbReference type="EC" id="5.2.1.8"/>
    </reaction>
</comment>
<comment type="subunit">
    <text evidence="3">Interacts with cwf13/snw1.</text>
</comment>
<comment type="interaction">
    <interactant intactId="EBI-1810686">
        <id>P87051</id>
    </interactant>
    <interactant intactId="EBI-457758">
        <id>Q09882</id>
        <label>prp45</label>
    </interactant>
    <organismsDiffer>false</organismsDiffer>
    <experiments>4</experiments>
</comment>
<comment type="similarity">
    <text evidence="4">Belongs to the cyclophilin-type PPIase family. PPIL1 subfamily.</text>
</comment>
<dbReference type="EC" id="5.2.1.8"/>
<dbReference type="EMBL" id="AF337536">
    <property type="protein sequence ID" value="AAK14383.1"/>
    <property type="molecule type" value="mRNA"/>
</dbReference>
<dbReference type="EMBL" id="CU329670">
    <property type="protein sequence ID" value="CAB08166.1"/>
    <property type="molecule type" value="Genomic_DNA"/>
</dbReference>
<dbReference type="PIR" id="T38930">
    <property type="entry name" value="T38930"/>
</dbReference>
<dbReference type="PDB" id="3JB9">
    <property type="method" value="EM"/>
    <property type="resolution" value="3.60 A"/>
    <property type="chains" value="d=1-155"/>
</dbReference>
<dbReference type="PDB" id="9ESH">
    <property type="method" value="EM"/>
    <property type="resolution" value="3.20 A"/>
    <property type="chains" value="d=1-155"/>
</dbReference>
<dbReference type="PDB" id="9ESI">
    <property type="method" value="EM"/>
    <property type="resolution" value="3.10 A"/>
    <property type="chains" value="d=1-155"/>
</dbReference>
<dbReference type="PDBsum" id="3JB9"/>
<dbReference type="PDBsum" id="9ESH"/>
<dbReference type="PDBsum" id="9ESI"/>
<dbReference type="EMDB" id="EMD-19941"/>
<dbReference type="EMDB" id="EMD-19942"/>
<dbReference type="SMR" id="P87051"/>
<dbReference type="BioGRID" id="279455">
    <property type="interactions" value="11"/>
</dbReference>
<dbReference type="FunCoup" id="P87051">
    <property type="interactions" value="632"/>
</dbReference>
<dbReference type="IntAct" id="P87051">
    <property type="interactions" value="1"/>
</dbReference>
<dbReference type="STRING" id="284812.P87051"/>
<dbReference type="PaxDb" id="4896-SPAC57A10.03.1"/>
<dbReference type="EnsemblFungi" id="SPAC57A10.03.1">
    <property type="protein sequence ID" value="SPAC57A10.03.1:pep"/>
    <property type="gene ID" value="SPAC57A10.03"/>
</dbReference>
<dbReference type="KEGG" id="spo:2543019"/>
<dbReference type="PomBase" id="SPAC57A10.03"/>
<dbReference type="VEuPathDB" id="FungiDB:SPAC57A10.03"/>
<dbReference type="eggNOG" id="KOG0881">
    <property type="taxonomic scope" value="Eukaryota"/>
</dbReference>
<dbReference type="HOGENOM" id="CLU_012062_16_3_1"/>
<dbReference type="InParanoid" id="P87051"/>
<dbReference type="OMA" id="ELYNDHA"/>
<dbReference type="PhylomeDB" id="P87051"/>
<dbReference type="Reactome" id="R-SPO-72163">
    <property type="pathway name" value="mRNA Splicing - Major Pathway"/>
</dbReference>
<dbReference type="EvolutionaryTrace" id="P87051"/>
<dbReference type="PRO" id="PR:P87051"/>
<dbReference type="Proteomes" id="UP000002485">
    <property type="component" value="Chromosome I"/>
</dbReference>
<dbReference type="GO" id="GO:0071013">
    <property type="term" value="C:catalytic step 2 spliceosome"/>
    <property type="evidence" value="ECO:0000318"/>
    <property type="project" value="GO_Central"/>
</dbReference>
<dbReference type="GO" id="GO:0005829">
    <property type="term" value="C:cytosol"/>
    <property type="evidence" value="ECO:0007005"/>
    <property type="project" value="PomBase"/>
</dbReference>
<dbReference type="GO" id="GO:0005634">
    <property type="term" value="C:nucleus"/>
    <property type="evidence" value="ECO:0007005"/>
    <property type="project" value="PomBase"/>
</dbReference>
<dbReference type="GO" id="GO:0071014">
    <property type="term" value="C:post-mRNA release spliceosomal complex"/>
    <property type="evidence" value="ECO:0000314"/>
    <property type="project" value="PomBase"/>
</dbReference>
<dbReference type="GO" id="GO:0000974">
    <property type="term" value="C:Prp19 complex"/>
    <property type="evidence" value="ECO:0000314"/>
    <property type="project" value="PomBase"/>
</dbReference>
<dbReference type="GO" id="GO:0005681">
    <property type="term" value="C:spliceosomal complex"/>
    <property type="evidence" value="ECO:0000314"/>
    <property type="project" value="PomBase"/>
</dbReference>
<dbReference type="GO" id="GO:0003755">
    <property type="term" value="F:peptidyl-prolyl cis-trans isomerase activity"/>
    <property type="evidence" value="ECO:0000314"/>
    <property type="project" value="PomBase"/>
</dbReference>
<dbReference type="GO" id="GO:0045292">
    <property type="term" value="P:mRNA cis splicing, via spliceosome"/>
    <property type="evidence" value="ECO:0000315"/>
    <property type="project" value="PomBase"/>
</dbReference>
<dbReference type="GO" id="GO:0000398">
    <property type="term" value="P:mRNA splicing, via spliceosome"/>
    <property type="evidence" value="ECO:0000318"/>
    <property type="project" value="GO_Central"/>
</dbReference>
<dbReference type="GO" id="GO:0006457">
    <property type="term" value="P:protein folding"/>
    <property type="evidence" value="ECO:0000318"/>
    <property type="project" value="GO_Central"/>
</dbReference>
<dbReference type="FunFam" id="2.40.100.10:FF:000008">
    <property type="entry name" value="Peptidyl-prolyl cis-trans isomerase"/>
    <property type="match status" value="1"/>
</dbReference>
<dbReference type="Gene3D" id="2.40.100.10">
    <property type="entry name" value="Cyclophilin-like"/>
    <property type="match status" value="1"/>
</dbReference>
<dbReference type="InterPro" id="IPR029000">
    <property type="entry name" value="Cyclophilin-like_dom_sf"/>
</dbReference>
<dbReference type="InterPro" id="IPR024936">
    <property type="entry name" value="Cyclophilin-type_PPIase"/>
</dbReference>
<dbReference type="InterPro" id="IPR020892">
    <property type="entry name" value="Cyclophilin-type_PPIase_CS"/>
</dbReference>
<dbReference type="InterPro" id="IPR002130">
    <property type="entry name" value="Cyclophilin-type_PPIase_dom"/>
</dbReference>
<dbReference type="InterPro" id="IPR044666">
    <property type="entry name" value="Cyclophilin_A-like"/>
</dbReference>
<dbReference type="PANTHER" id="PTHR45625">
    <property type="entry name" value="PEPTIDYL-PROLYL CIS-TRANS ISOMERASE-RELATED"/>
    <property type="match status" value="1"/>
</dbReference>
<dbReference type="PANTHER" id="PTHR45625:SF4">
    <property type="entry name" value="PEPTIDYLPROLYL ISOMERASE DOMAIN AND WD REPEAT-CONTAINING PROTEIN 1"/>
    <property type="match status" value="1"/>
</dbReference>
<dbReference type="Pfam" id="PF00160">
    <property type="entry name" value="Pro_isomerase"/>
    <property type="match status" value="1"/>
</dbReference>
<dbReference type="PIRSF" id="PIRSF001467">
    <property type="entry name" value="Peptidylpro_ismrse"/>
    <property type="match status" value="1"/>
</dbReference>
<dbReference type="PRINTS" id="PR00153">
    <property type="entry name" value="CSAPPISMRASE"/>
</dbReference>
<dbReference type="SUPFAM" id="SSF50891">
    <property type="entry name" value="Cyclophilin-like"/>
    <property type="match status" value="1"/>
</dbReference>
<dbReference type="PROSITE" id="PS00170">
    <property type="entry name" value="CSA_PPIASE_1"/>
    <property type="match status" value="1"/>
</dbReference>
<dbReference type="PROSITE" id="PS50072">
    <property type="entry name" value="CSA_PPIASE_2"/>
    <property type="match status" value="1"/>
</dbReference>
<feature type="chain" id="PRO_0000064176" description="Peptidyl-prolyl cis-trans isomerase ppi1">
    <location>
        <begin position="1"/>
        <end position="155"/>
    </location>
</feature>
<feature type="domain" description="PPIase cyclophilin-type" evidence="2">
    <location>
        <begin position="1"/>
        <end position="154"/>
    </location>
</feature>
<feature type="strand" evidence="6">
    <location>
        <begin position="3"/>
        <end position="17"/>
    </location>
</feature>
<feature type="turn" evidence="6">
    <location>
        <begin position="19"/>
        <end position="21"/>
    </location>
</feature>
<feature type="helix" evidence="6">
    <location>
        <begin position="24"/>
        <end position="35"/>
    </location>
</feature>
<feature type="turn" evidence="6">
    <location>
        <begin position="36"/>
        <end position="40"/>
    </location>
</feature>
<feature type="strand" evidence="6">
    <location>
        <begin position="45"/>
        <end position="47"/>
    </location>
</feature>
<feature type="turn" evidence="6">
    <location>
        <begin position="48"/>
        <end position="50"/>
    </location>
</feature>
<feature type="strand" evidence="6">
    <location>
        <begin position="51"/>
        <end position="54"/>
    </location>
</feature>
<feature type="strand" evidence="5">
    <location>
        <begin position="57"/>
        <end position="61"/>
    </location>
</feature>
<feature type="strand" evidence="6">
    <location>
        <begin position="67"/>
        <end position="70"/>
    </location>
</feature>
<feature type="strand" evidence="6">
    <location>
        <begin position="87"/>
        <end position="90"/>
    </location>
</feature>
<feature type="strand" evidence="6">
    <location>
        <begin position="93"/>
        <end position="96"/>
    </location>
</feature>
<feature type="strand" evidence="6">
    <location>
        <begin position="102"/>
        <end position="105"/>
    </location>
</feature>
<feature type="helix" evidence="6">
    <location>
        <begin position="110"/>
        <end position="112"/>
    </location>
</feature>
<feature type="turn" evidence="6">
    <location>
        <begin position="113"/>
        <end position="115"/>
    </location>
</feature>
<feature type="strand" evidence="6">
    <location>
        <begin position="118"/>
        <end position="124"/>
    </location>
</feature>
<feature type="helix" evidence="6">
    <location>
        <begin position="126"/>
        <end position="132"/>
    </location>
</feature>
<feature type="strand" evidence="6">
    <location>
        <begin position="139"/>
        <end position="141"/>
    </location>
</feature>
<feature type="strand" evidence="6">
    <location>
        <begin position="143"/>
        <end position="145"/>
    </location>
</feature>
<feature type="strand" evidence="6">
    <location>
        <begin position="148"/>
        <end position="154"/>
    </location>
</feature>
<reference key="1">
    <citation type="journal article" date="2001" name="Biochim. Biophys. Acta">
        <title>Cyclophilins of a novel subfamily interact with SNW/SKIP coregulator in Dictyostelium discoideum and Schizosaccharomyces pombe.</title>
        <authorList>
            <person name="Skruzny M."/>
            <person name="Ambrozkova M."/>
            <person name="Fukova I."/>
            <person name="Martinkova K."/>
            <person name="Blahuskova A."/>
            <person name="Hamplova L."/>
            <person name="Puta F."/>
            <person name="Folk P."/>
        </authorList>
    </citation>
    <scope>NUCLEOTIDE SEQUENCE [MRNA]</scope>
    <scope>INTERACTION WITH SNW1</scope>
</reference>
<reference key="2">
    <citation type="journal article" date="2002" name="Nature">
        <title>The genome sequence of Schizosaccharomyces pombe.</title>
        <authorList>
            <person name="Wood V."/>
            <person name="Gwilliam R."/>
            <person name="Rajandream M.A."/>
            <person name="Lyne M.H."/>
            <person name="Lyne R."/>
            <person name="Stewart A."/>
            <person name="Sgouros J.G."/>
            <person name="Peat N."/>
            <person name="Hayles J."/>
            <person name="Baker S.G."/>
            <person name="Basham D."/>
            <person name="Bowman S."/>
            <person name="Brooks K."/>
            <person name="Brown D."/>
            <person name="Brown S."/>
            <person name="Chillingworth T."/>
            <person name="Churcher C.M."/>
            <person name="Collins M."/>
            <person name="Connor R."/>
            <person name="Cronin A."/>
            <person name="Davis P."/>
            <person name="Feltwell T."/>
            <person name="Fraser A."/>
            <person name="Gentles S."/>
            <person name="Goble A."/>
            <person name="Hamlin N."/>
            <person name="Harris D.E."/>
            <person name="Hidalgo J."/>
            <person name="Hodgson G."/>
            <person name="Holroyd S."/>
            <person name="Hornsby T."/>
            <person name="Howarth S."/>
            <person name="Huckle E.J."/>
            <person name="Hunt S."/>
            <person name="Jagels K."/>
            <person name="James K.D."/>
            <person name="Jones L."/>
            <person name="Jones M."/>
            <person name="Leather S."/>
            <person name="McDonald S."/>
            <person name="McLean J."/>
            <person name="Mooney P."/>
            <person name="Moule S."/>
            <person name="Mungall K.L."/>
            <person name="Murphy L.D."/>
            <person name="Niblett D."/>
            <person name="Odell C."/>
            <person name="Oliver K."/>
            <person name="O'Neil S."/>
            <person name="Pearson D."/>
            <person name="Quail M.A."/>
            <person name="Rabbinowitsch E."/>
            <person name="Rutherford K.M."/>
            <person name="Rutter S."/>
            <person name="Saunders D."/>
            <person name="Seeger K."/>
            <person name="Sharp S."/>
            <person name="Skelton J."/>
            <person name="Simmonds M.N."/>
            <person name="Squares R."/>
            <person name="Squares S."/>
            <person name="Stevens K."/>
            <person name="Taylor K."/>
            <person name="Taylor R.G."/>
            <person name="Tivey A."/>
            <person name="Walsh S.V."/>
            <person name="Warren T."/>
            <person name="Whitehead S."/>
            <person name="Woodward J.R."/>
            <person name="Volckaert G."/>
            <person name="Aert R."/>
            <person name="Robben J."/>
            <person name="Grymonprez B."/>
            <person name="Weltjens I."/>
            <person name="Vanstreels E."/>
            <person name="Rieger M."/>
            <person name="Schaefer M."/>
            <person name="Mueller-Auer S."/>
            <person name="Gabel C."/>
            <person name="Fuchs M."/>
            <person name="Duesterhoeft A."/>
            <person name="Fritzc C."/>
            <person name="Holzer E."/>
            <person name="Moestl D."/>
            <person name="Hilbert H."/>
            <person name="Borzym K."/>
            <person name="Langer I."/>
            <person name="Beck A."/>
            <person name="Lehrach H."/>
            <person name="Reinhardt R."/>
            <person name="Pohl T.M."/>
            <person name="Eger P."/>
            <person name="Zimmermann W."/>
            <person name="Wedler H."/>
            <person name="Wambutt R."/>
            <person name="Purnelle B."/>
            <person name="Goffeau A."/>
            <person name="Cadieu E."/>
            <person name="Dreano S."/>
            <person name="Gloux S."/>
            <person name="Lelaure V."/>
            <person name="Mottier S."/>
            <person name="Galibert F."/>
            <person name="Aves S.J."/>
            <person name="Xiang Z."/>
            <person name="Hunt C."/>
            <person name="Moore K."/>
            <person name="Hurst S.M."/>
            <person name="Lucas M."/>
            <person name="Rochet M."/>
            <person name="Gaillardin C."/>
            <person name="Tallada V.A."/>
            <person name="Garzon A."/>
            <person name="Thode G."/>
            <person name="Daga R.R."/>
            <person name="Cruzado L."/>
            <person name="Jimenez J."/>
            <person name="Sanchez M."/>
            <person name="del Rey F."/>
            <person name="Benito J."/>
            <person name="Dominguez A."/>
            <person name="Revuelta J.L."/>
            <person name="Moreno S."/>
            <person name="Armstrong J."/>
            <person name="Forsburg S.L."/>
            <person name="Cerutti L."/>
            <person name="Lowe T."/>
            <person name="McCombie W.R."/>
            <person name="Paulsen I."/>
            <person name="Potashkin J."/>
            <person name="Shpakovski G.V."/>
            <person name="Ussery D."/>
            <person name="Barrell B.G."/>
            <person name="Nurse P."/>
        </authorList>
    </citation>
    <scope>NUCLEOTIDE SEQUENCE [LARGE SCALE GENOMIC DNA]</scope>
    <source>
        <strain>972 / ATCC 24843</strain>
    </source>
</reference>
<organism>
    <name type="scientific">Schizosaccharomyces pombe (strain 972 / ATCC 24843)</name>
    <name type="common">Fission yeast</name>
    <dbReference type="NCBI Taxonomy" id="284812"/>
    <lineage>
        <taxon>Eukaryota</taxon>
        <taxon>Fungi</taxon>
        <taxon>Dikarya</taxon>
        <taxon>Ascomycota</taxon>
        <taxon>Taphrinomycotina</taxon>
        <taxon>Schizosaccharomycetes</taxon>
        <taxon>Schizosaccharomycetales</taxon>
        <taxon>Schizosaccharomycetaceae</taxon>
        <taxon>Schizosaccharomyces</taxon>
    </lineage>
</organism>